<comment type="function">
    <text evidence="2 3">Growth factor of the TGF-beta superfamily that plays essential roles in many developmental processes, including neurogenesis, vascular development, angiogenesis and osteogenesis (By similarity). Acts in concert with PTHLH/PTHRP to stimulate ductal outgrowth during embryonic mammary development and to inhibit hair follicle induction (By similarity). Initiates the canonical BMP signaling cascade by associating with type I receptor BMPR1A and type II receptor BMPR2. Once all three components are bound together in a complex at the cell surface, BMPR2 phosphorylates and activates BMPR1A. In turn, BMPR1A propagates signal by phosphorylating SMAD1/5/8 that travel to the nucleus and act as activators and repressors of transcription of target genes. Positively regulates the expression of odontogenic development regulator MSX1 via inducing the IPO7-mediated import of SMAD1 to the nucleus (By similarity). Required for MSX1-mediated mesenchymal molar tooth bud development beyond the bud stage, via promoting Wnt signaling (By similarity). Acts as a positive regulator of odontoblast differentiation during mesenchymal tooth germ formation, expression is repressed during the bell stage by MSX1-mediated inhibition of CTNNB1 signaling (By similarity). Able to induce its own expression in dental mesenchymal cells and also in the neighboring dental epithelial cells via an MSX1-mediated pathway (By similarity). Can also signal through non-canonical BMP pathways such as ERK/MAP kinase, PI3K/Akt, or SRC cascades. For example, induces SRC phosphorylation which, in turn, activates VEGFR2, leading to an angiogenic response (By similarity).</text>
</comment>
<comment type="subunit">
    <text evidence="2 3">Homodimer; disulfide-linked (By similarity). Interacts with GREM2. Part of a complex consisting of TWSG1 and CHRD. Interacts with the serine proteases, HTRA1 and HTRA3; the interaction with either inhibits BMP4-mediated signaling. The HTRA protease activity is required for this inhibition (By similarity). Interacts with SOSTDC1. Interacts with FBN1 (via N-terminal domain) and FBN2. Interacts with type I receptor BMPR1A. Interacts with type II receptor BMPR2. Interacts with FSTL1; this interaction inhibits the activation of the BMP4/Smad1/5/8 signaling pathway (By similarity). Interacts with TGFBR3 (By similarity).</text>
</comment>
<comment type="subcellular location">
    <subcellularLocation>
        <location evidence="1">Secreted</location>
        <location evidence="1">Extracellular space</location>
        <location evidence="1">Extracellular matrix</location>
    </subcellularLocation>
</comment>
<comment type="similarity">
    <text evidence="7">Belongs to the TGF-beta family.</text>
</comment>
<name>BMP4_SUNMU</name>
<proteinExistence type="evidence at transcript level"/>
<reference key="1">
    <citation type="journal article" date="2002" name="Cell. Mol. Biol.">
        <title>Comparison of expression patterns of fibroblast growth factor 8, bone morphogenetic protein 4 and sonic hedgehog in jaw development of the house shrew, Suncus murinus.</title>
        <authorList>
            <person name="Ogi H."/>
            <person name="Tabata M.J."/>
            <person name="Yamanaka A."/>
            <person name="Yasui K."/>
            <person name="Uemura M."/>
        </authorList>
    </citation>
    <scope>NUCLEOTIDE SEQUENCE [MRNA]</scope>
</reference>
<sequence>MIPGNRMLMVVLLCQVLLGGASHASLIPETGKKKVAEIQGHAGGRRSGQSHELLRDFEATLLQMFGLRRRPQPSKSAVIPDYMRDLYRLQSGEEEEEEQIRSIDLEYPERPTSRANTVRSFHHEEHLEDIPGTSENSAFRFFFNLSSIPENEVISSAELRLFREQVDQGPDWEQGFHRINIYEVMKPPAEVVPGHLITRLLDTRLVHHNVTRWETFDVSPAVLRWTREKQPNYGLAIEVTHLHQTRTHQGQHVRISRSLPQGNGDWAQLRPLLVTFGHDGRGHALTRRRRAKRSPKHHPQRARKKNKNCRRHSLYVDFSDVGWNDWIVAPPGYQAFYCHGDCPFPLADHLNSTNHAIVQTLVNSVNSSIPKACCVPTELSAISMLYLDEYDKVVLKNYQEMVVEGCGCR</sequence>
<accession>Q8MJV5</accession>
<dbReference type="EMBL" id="AB081499">
    <property type="protein sequence ID" value="BAC02895.1"/>
    <property type="molecule type" value="mRNA"/>
</dbReference>
<dbReference type="SMR" id="Q8MJV5"/>
<dbReference type="GlyCosmos" id="Q8MJV5">
    <property type="glycosylation" value="4 sites, No reported glycans"/>
</dbReference>
<dbReference type="GO" id="GO:0005615">
    <property type="term" value="C:extracellular space"/>
    <property type="evidence" value="ECO:0007669"/>
    <property type="project" value="UniProtKB-KW"/>
</dbReference>
<dbReference type="GO" id="GO:0070700">
    <property type="term" value="F:BMP receptor binding"/>
    <property type="evidence" value="ECO:0000250"/>
    <property type="project" value="UniProtKB"/>
</dbReference>
<dbReference type="GO" id="GO:0042056">
    <property type="term" value="F:chemoattractant activity"/>
    <property type="evidence" value="ECO:0000250"/>
    <property type="project" value="UniProtKB"/>
</dbReference>
<dbReference type="GO" id="GO:0005125">
    <property type="term" value="F:cytokine activity"/>
    <property type="evidence" value="ECO:0007669"/>
    <property type="project" value="UniProtKB-KW"/>
</dbReference>
<dbReference type="GO" id="GO:0008083">
    <property type="term" value="F:growth factor activity"/>
    <property type="evidence" value="ECO:0007669"/>
    <property type="project" value="UniProtKB-KW"/>
</dbReference>
<dbReference type="GO" id="GO:0002043">
    <property type="term" value="P:blood vessel endothelial cell proliferation involved in sprouting angiogenesis"/>
    <property type="evidence" value="ECO:0000250"/>
    <property type="project" value="UniProtKB"/>
</dbReference>
<dbReference type="GO" id="GO:0030509">
    <property type="term" value="P:BMP signaling pathway"/>
    <property type="evidence" value="ECO:0000250"/>
    <property type="project" value="UniProtKB"/>
</dbReference>
<dbReference type="GO" id="GO:0001658">
    <property type="term" value="P:branching involved in ureteric bud morphogenesis"/>
    <property type="evidence" value="ECO:0000250"/>
    <property type="project" value="UniProtKB"/>
</dbReference>
<dbReference type="GO" id="GO:0002062">
    <property type="term" value="P:chondrocyte differentiation"/>
    <property type="evidence" value="ECO:0000250"/>
    <property type="project" value="UniProtKB"/>
</dbReference>
<dbReference type="GO" id="GO:0035993">
    <property type="term" value="P:deltoid tuberosity development"/>
    <property type="evidence" value="ECO:0000250"/>
    <property type="project" value="UniProtKB"/>
</dbReference>
<dbReference type="GO" id="GO:0001958">
    <property type="term" value="P:endochondral ossification"/>
    <property type="evidence" value="ECO:0000250"/>
    <property type="project" value="UniProtKB"/>
</dbReference>
<dbReference type="GO" id="GO:0072104">
    <property type="term" value="P:glomerular capillary formation"/>
    <property type="evidence" value="ECO:0000250"/>
    <property type="project" value="UniProtKB"/>
</dbReference>
<dbReference type="GO" id="GO:0003129">
    <property type="term" value="P:heart induction"/>
    <property type="evidence" value="ECO:0000250"/>
    <property type="project" value="UniProtKB"/>
</dbReference>
<dbReference type="GO" id="GO:0002244">
    <property type="term" value="P:hematopoietic progenitor cell differentiation"/>
    <property type="evidence" value="ECO:0000250"/>
    <property type="project" value="UniProtKB"/>
</dbReference>
<dbReference type="GO" id="GO:0048392">
    <property type="term" value="P:intermediate mesodermal cell differentiation"/>
    <property type="evidence" value="ECO:0000250"/>
    <property type="project" value="UniProtKB"/>
</dbReference>
<dbReference type="GO" id="GO:0001822">
    <property type="term" value="P:kidney development"/>
    <property type="evidence" value="ECO:0000250"/>
    <property type="project" value="UniProtKB"/>
</dbReference>
<dbReference type="GO" id="GO:0060426">
    <property type="term" value="P:lung vasculature development"/>
    <property type="evidence" value="ECO:0000250"/>
    <property type="project" value="UniProtKB"/>
</dbReference>
<dbReference type="GO" id="GO:0002320">
    <property type="term" value="P:lymphoid progenitor cell differentiation"/>
    <property type="evidence" value="ECO:0000250"/>
    <property type="project" value="UniProtKB"/>
</dbReference>
<dbReference type="GO" id="GO:0001823">
    <property type="term" value="P:mesonephros development"/>
    <property type="evidence" value="ECO:0000250"/>
    <property type="project" value="UniProtKB"/>
</dbReference>
<dbReference type="GO" id="GO:0090191">
    <property type="term" value="P:negative regulation of branching involved in ureteric bud morphogenesis"/>
    <property type="evidence" value="ECO:0000250"/>
    <property type="project" value="UniProtKB"/>
</dbReference>
<dbReference type="GO" id="GO:0045786">
    <property type="term" value="P:negative regulation of cell cycle"/>
    <property type="evidence" value="ECO:0000250"/>
    <property type="project" value="UniProtKB"/>
</dbReference>
<dbReference type="GO" id="GO:0008285">
    <property type="term" value="P:negative regulation of cell population proliferation"/>
    <property type="evidence" value="ECO:0000250"/>
    <property type="project" value="UniProtKB"/>
</dbReference>
<dbReference type="GO" id="GO:0072125">
    <property type="term" value="P:negative regulation of glomerular mesangial cell proliferation"/>
    <property type="evidence" value="ECO:0000250"/>
    <property type="project" value="UniProtKB"/>
</dbReference>
<dbReference type="GO" id="GO:0090194">
    <property type="term" value="P:negative regulation of glomerulus development"/>
    <property type="evidence" value="ECO:0000250"/>
    <property type="project" value="UniProtKB"/>
</dbReference>
<dbReference type="GO" id="GO:0033088">
    <property type="term" value="P:negative regulation of immature T cell proliferation in thymus"/>
    <property type="evidence" value="ECO:0000250"/>
    <property type="project" value="UniProtKB"/>
</dbReference>
<dbReference type="GO" id="GO:0072200">
    <property type="term" value="P:negative regulation of mesenchymal cell proliferation involved in ureter development"/>
    <property type="evidence" value="ECO:0000250"/>
    <property type="project" value="UniProtKB"/>
</dbReference>
<dbReference type="GO" id="GO:2000007">
    <property type="term" value="P:negative regulation of metanephric comma-shaped body morphogenesis"/>
    <property type="evidence" value="ECO:0000250"/>
    <property type="project" value="UniProtKB"/>
</dbReference>
<dbReference type="GO" id="GO:2000005">
    <property type="term" value="P:negative regulation of metanephric S-shaped body morphogenesis"/>
    <property type="evidence" value="ECO:0000250"/>
    <property type="project" value="UniProtKB"/>
</dbReference>
<dbReference type="GO" id="GO:0045839">
    <property type="term" value="P:negative regulation of mitotic nuclear division"/>
    <property type="evidence" value="ECO:0000250"/>
    <property type="project" value="UniProtKB"/>
</dbReference>
<dbReference type="GO" id="GO:0070244">
    <property type="term" value="P:negative regulation of thymocyte apoptotic process"/>
    <property type="evidence" value="ECO:0000250"/>
    <property type="project" value="UniProtKB"/>
</dbReference>
<dbReference type="GO" id="GO:0072179">
    <property type="term" value="P:nephric duct formation"/>
    <property type="evidence" value="ECO:0000250"/>
    <property type="project" value="UniProtKB"/>
</dbReference>
<dbReference type="GO" id="GO:0042476">
    <property type="term" value="P:odontogenesis"/>
    <property type="evidence" value="ECO:0000250"/>
    <property type="project" value="UniProtKB"/>
</dbReference>
<dbReference type="GO" id="GO:0001649">
    <property type="term" value="P:osteoblast differentiation"/>
    <property type="evidence" value="ECO:0000250"/>
    <property type="project" value="UniProtKB"/>
</dbReference>
<dbReference type="GO" id="GO:0030513">
    <property type="term" value="P:positive regulation of BMP signaling pathway"/>
    <property type="evidence" value="ECO:0000250"/>
    <property type="project" value="UniProtKB"/>
</dbReference>
<dbReference type="GO" id="GO:0030501">
    <property type="term" value="P:positive regulation of bone mineralization"/>
    <property type="evidence" value="ECO:0000250"/>
    <property type="project" value="UniProtKB"/>
</dbReference>
<dbReference type="GO" id="GO:0061047">
    <property type="term" value="P:positive regulation of branching involved in lung morphogenesis"/>
    <property type="evidence" value="ECO:0000250"/>
    <property type="project" value="UniProtKB"/>
</dbReference>
<dbReference type="GO" id="GO:0055020">
    <property type="term" value="P:positive regulation of cardiac muscle fiber development"/>
    <property type="evidence" value="ECO:0000250"/>
    <property type="project" value="UniProtKB"/>
</dbReference>
<dbReference type="GO" id="GO:0008284">
    <property type="term" value="P:positive regulation of cell population proliferation"/>
    <property type="evidence" value="ECO:0000250"/>
    <property type="project" value="UniProtKB"/>
</dbReference>
<dbReference type="GO" id="GO:0032967">
    <property type="term" value="P:positive regulation of collagen biosynthetic process"/>
    <property type="evidence" value="ECO:0000250"/>
    <property type="project" value="UniProtKB"/>
</dbReference>
<dbReference type="GO" id="GO:0045893">
    <property type="term" value="P:positive regulation of DNA-templated transcription"/>
    <property type="evidence" value="ECO:0000250"/>
    <property type="project" value="UniProtKB"/>
</dbReference>
<dbReference type="GO" id="GO:0045606">
    <property type="term" value="P:positive regulation of epidermal cell differentiation"/>
    <property type="evidence" value="ECO:0000250"/>
    <property type="project" value="CAFA"/>
</dbReference>
<dbReference type="GO" id="GO:0050679">
    <property type="term" value="P:positive regulation of epithelial cell proliferation"/>
    <property type="evidence" value="ECO:0000250"/>
    <property type="project" value="UniProtKB"/>
</dbReference>
<dbReference type="GO" id="GO:1901331">
    <property type="term" value="P:positive regulation of odontoblast differentiation"/>
    <property type="evidence" value="ECO:0000250"/>
    <property type="project" value="UniProtKB"/>
</dbReference>
<dbReference type="GO" id="GO:0045669">
    <property type="term" value="P:positive regulation of osteoblast differentiation"/>
    <property type="evidence" value="ECO:0000250"/>
    <property type="project" value="UniProtKB"/>
</dbReference>
<dbReference type="GO" id="GO:1900182">
    <property type="term" value="P:positive regulation of protein localization to nucleus"/>
    <property type="evidence" value="ECO:0000250"/>
    <property type="project" value="UniProtKB"/>
</dbReference>
<dbReference type="GO" id="GO:0060391">
    <property type="term" value="P:positive regulation of SMAD protein signal transduction"/>
    <property type="evidence" value="ECO:0000250"/>
    <property type="project" value="UniProtKB"/>
</dbReference>
<dbReference type="GO" id="GO:0010453">
    <property type="term" value="P:regulation of cell fate commitment"/>
    <property type="evidence" value="ECO:0000250"/>
    <property type="project" value="CAFA"/>
</dbReference>
<dbReference type="GO" id="GO:0003139">
    <property type="term" value="P:secondary heart field specification"/>
    <property type="evidence" value="ECO:0000250"/>
    <property type="project" value="UniProtKB"/>
</dbReference>
<dbReference type="GO" id="GO:0048745">
    <property type="term" value="P:smooth muscle tissue development"/>
    <property type="evidence" value="ECO:0000250"/>
    <property type="project" value="UniProtKB"/>
</dbReference>
<dbReference type="GO" id="GO:0035990">
    <property type="term" value="P:tendon cell differentiation"/>
    <property type="evidence" value="ECO:0000250"/>
    <property type="project" value="UniProtKB"/>
</dbReference>
<dbReference type="GO" id="GO:0003323">
    <property type="term" value="P:type B pancreatic cell development"/>
    <property type="evidence" value="ECO:0000250"/>
    <property type="project" value="UniProtKB"/>
</dbReference>
<dbReference type="CDD" id="cd19391">
    <property type="entry name" value="TGF_beta_BMP4_BMP2B"/>
    <property type="match status" value="1"/>
</dbReference>
<dbReference type="FunFam" id="2.10.90.10:FF:000103">
    <property type="entry name" value="Bone morphogenetic protein 16"/>
    <property type="match status" value="1"/>
</dbReference>
<dbReference type="FunFam" id="2.60.120.970:FF:000005">
    <property type="entry name" value="Bone morphogenetic protein 4"/>
    <property type="match status" value="1"/>
</dbReference>
<dbReference type="Gene3D" id="2.60.120.970">
    <property type="match status" value="1"/>
</dbReference>
<dbReference type="Gene3D" id="2.10.90.10">
    <property type="entry name" value="Cystine-knot cytokines"/>
    <property type="match status" value="1"/>
</dbReference>
<dbReference type="InterPro" id="IPR047833">
    <property type="entry name" value="BMP4_TGF_beta-like"/>
</dbReference>
<dbReference type="InterPro" id="IPR029034">
    <property type="entry name" value="Cystine-knot_cytokine"/>
</dbReference>
<dbReference type="InterPro" id="IPR001839">
    <property type="entry name" value="TGF-b_C"/>
</dbReference>
<dbReference type="InterPro" id="IPR001111">
    <property type="entry name" value="TGF-b_propeptide"/>
</dbReference>
<dbReference type="InterPro" id="IPR015615">
    <property type="entry name" value="TGF-beta-rel"/>
</dbReference>
<dbReference type="InterPro" id="IPR017948">
    <property type="entry name" value="TGFb_CS"/>
</dbReference>
<dbReference type="PANTHER" id="PTHR11848:SF165">
    <property type="entry name" value="BONE MORPHOGENETIC PROTEIN 4"/>
    <property type="match status" value="1"/>
</dbReference>
<dbReference type="PANTHER" id="PTHR11848">
    <property type="entry name" value="TGF-BETA FAMILY"/>
    <property type="match status" value="1"/>
</dbReference>
<dbReference type="Pfam" id="PF00019">
    <property type="entry name" value="TGF_beta"/>
    <property type="match status" value="1"/>
</dbReference>
<dbReference type="Pfam" id="PF00688">
    <property type="entry name" value="TGFb_propeptide"/>
    <property type="match status" value="1"/>
</dbReference>
<dbReference type="SMART" id="SM00204">
    <property type="entry name" value="TGFB"/>
    <property type="match status" value="1"/>
</dbReference>
<dbReference type="SUPFAM" id="SSF57501">
    <property type="entry name" value="Cystine-knot cytokines"/>
    <property type="match status" value="1"/>
</dbReference>
<dbReference type="PROSITE" id="PS00250">
    <property type="entry name" value="TGF_BETA_1"/>
    <property type="match status" value="1"/>
</dbReference>
<dbReference type="PROSITE" id="PS51362">
    <property type="entry name" value="TGF_BETA_2"/>
    <property type="match status" value="1"/>
</dbReference>
<evidence type="ECO:0000250" key="1"/>
<evidence type="ECO:0000250" key="2">
    <source>
        <dbReference type="UniProtKB" id="P12644"/>
    </source>
</evidence>
<evidence type="ECO:0000250" key="3">
    <source>
        <dbReference type="UniProtKB" id="P21275"/>
    </source>
</evidence>
<evidence type="ECO:0000255" key="4"/>
<evidence type="ECO:0000256" key="5">
    <source>
        <dbReference type="SAM" id="MobiDB-lite"/>
    </source>
</evidence>
<evidence type="ECO:0000303" key="6">
    <source>
    </source>
</evidence>
<evidence type="ECO:0000305" key="7"/>
<gene>
    <name evidence="3" type="primary">BMP4</name>
</gene>
<organism>
    <name type="scientific">Suncus murinus</name>
    <name type="common">Asian house shrew</name>
    <name type="synonym">Musk shrew</name>
    <dbReference type="NCBI Taxonomy" id="9378"/>
    <lineage>
        <taxon>Eukaryota</taxon>
        <taxon>Metazoa</taxon>
        <taxon>Chordata</taxon>
        <taxon>Craniata</taxon>
        <taxon>Vertebrata</taxon>
        <taxon>Euteleostomi</taxon>
        <taxon>Mammalia</taxon>
        <taxon>Eutheria</taxon>
        <taxon>Laurasiatheria</taxon>
        <taxon>Eulipotyphla</taxon>
        <taxon>Soricidae</taxon>
        <taxon>Crocidurinae</taxon>
        <taxon>Suncus</taxon>
    </lineage>
</organism>
<protein>
    <recommendedName>
        <fullName evidence="3">Bone morphogenetic protein 4</fullName>
        <shortName evidence="3">BMP-4</shortName>
        <shortName evidence="6">sBmp4</shortName>
    </recommendedName>
</protein>
<feature type="signal peptide" evidence="4">
    <location>
        <begin position="1"/>
        <end position="19"/>
    </location>
</feature>
<feature type="propeptide" id="PRO_0000253022" evidence="1">
    <location>
        <begin position="20"/>
        <end position="293"/>
    </location>
</feature>
<feature type="chain" id="PRO_0000253023" description="Bone morphogenetic protein 4">
    <location>
        <begin position="294"/>
        <end position="409"/>
    </location>
</feature>
<feature type="region of interest" description="Disordered" evidence="5">
    <location>
        <begin position="284"/>
        <end position="308"/>
    </location>
</feature>
<feature type="modified residue" description="Phosphoserine" evidence="2">
    <location>
        <position position="91"/>
    </location>
</feature>
<feature type="glycosylation site" description="N-linked (GlcNAc...) asparagine" evidence="4">
    <location>
        <position position="144"/>
    </location>
</feature>
<feature type="glycosylation site" description="N-linked (GlcNAc...) asparagine" evidence="4">
    <location>
        <position position="209"/>
    </location>
</feature>
<feature type="glycosylation site" description="N-linked (GlcNAc...) asparagine" evidence="4">
    <location>
        <position position="351"/>
    </location>
</feature>
<feature type="glycosylation site" description="N-linked (GlcNAc...) asparagine" evidence="4">
    <location>
        <position position="366"/>
    </location>
</feature>
<feature type="disulfide bond" evidence="1">
    <location>
        <begin position="309"/>
        <end position="374"/>
    </location>
</feature>
<feature type="disulfide bond" evidence="1">
    <location>
        <begin position="338"/>
        <end position="406"/>
    </location>
</feature>
<feature type="disulfide bond" evidence="1">
    <location>
        <begin position="342"/>
        <end position="408"/>
    </location>
</feature>
<feature type="disulfide bond" description="Interchain" evidence="1">
    <location>
        <position position="373"/>
    </location>
</feature>
<keyword id="KW-0891">Chondrogenesis</keyword>
<keyword id="KW-0165">Cleavage on pair of basic residues</keyword>
<keyword id="KW-0202">Cytokine</keyword>
<keyword id="KW-0217">Developmental protein</keyword>
<keyword id="KW-0221">Differentiation</keyword>
<keyword id="KW-1015">Disulfide bond</keyword>
<keyword id="KW-0272">Extracellular matrix</keyword>
<keyword id="KW-0325">Glycoprotein</keyword>
<keyword id="KW-0339">Growth factor</keyword>
<keyword id="KW-0892">Osteogenesis</keyword>
<keyword id="KW-0597">Phosphoprotein</keyword>
<keyword id="KW-0964">Secreted</keyword>
<keyword id="KW-0732">Signal</keyword>